<organism>
    <name type="scientific">Streptococcus pyogenes serotype M5 (strain Manfredo)</name>
    <dbReference type="NCBI Taxonomy" id="160491"/>
    <lineage>
        <taxon>Bacteria</taxon>
        <taxon>Bacillati</taxon>
        <taxon>Bacillota</taxon>
        <taxon>Bacilli</taxon>
        <taxon>Lactobacillales</taxon>
        <taxon>Streptococcaceae</taxon>
        <taxon>Streptococcus</taxon>
    </lineage>
</organism>
<sequence>MSRIGNKVITMPAGVELTNNNNVITVKGPKGELTREFNKNIEIKVEGTEITVVRPNDSKEMKTIHGTTRANLNNMVVGVSEGFKKDLEMKGVGYRAQLQGTKLVLSVGKSHQDEVEAPEGITFTVANPTSISVEGINKEVVGQTAAYIRSLRSPEPYKGKGIRYVGEYVRLKEGKTGK</sequence>
<gene>
    <name evidence="1" type="primary">rplF</name>
    <name type="ordered locus">SpyM50059</name>
</gene>
<accession>A2RC29</accession>
<proteinExistence type="inferred from homology"/>
<evidence type="ECO:0000255" key="1">
    <source>
        <dbReference type="HAMAP-Rule" id="MF_01365"/>
    </source>
</evidence>
<evidence type="ECO:0000305" key="2"/>
<feature type="chain" id="PRO_1000055316" description="Large ribosomal subunit protein uL6">
    <location>
        <begin position="1"/>
        <end position="178"/>
    </location>
</feature>
<protein>
    <recommendedName>
        <fullName evidence="1">Large ribosomal subunit protein uL6</fullName>
    </recommendedName>
    <alternativeName>
        <fullName evidence="2">50S ribosomal protein L6</fullName>
    </alternativeName>
</protein>
<keyword id="KW-0687">Ribonucleoprotein</keyword>
<keyword id="KW-0689">Ribosomal protein</keyword>
<keyword id="KW-0694">RNA-binding</keyword>
<keyword id="KW-0699">rRNA-binding</keyword>
<reference key="1">
    <citation type="journal article" date="2007" name="J. Bacteriol.">
        <title>Complete genome of acute rheumatic fever-associated serotype M5 Streptococcus pyogenes strain Manfredo.</title>
        <authorList>
            <person name="Holden M.T.G."/>
            <person name="Scott A."/>
            <person name="Cherevach I."/>
            <person name="Chillingworth T."/>
            <person name="Churcher C."/>
            <person name="Cronin A."/>
            <person name="Dowd L."/>
            <person name="Feltwell T."/>
            <person name="Hamlin N."/>
            <person name="Holroyd S."/>
            <person name="Jagels K."/>
            <person name="Moule S."/>
            <person name="Mungall K."/>
            <person name="Quail M.A."/>
            <person name="Price C."/>
            <person name="Rabbinowitsch E."/>
            <person name="Sharp S."/>
            <person name="Skelton J."/>
            <person name="Whitehead S."/>
            <person name="Barrell B.G."/>
            <person name="Kehoe M."/>
            <person name="Parkhill J."/>
        </authorList>
    </citation>
    <scope>NUCLEOTIDE SEQUENCE [LARGE SCALE GENOMIC DNA]</scope>
    <source>
        <strain>Manfredo</strain>
    </source>
</reference>
<name>RL6_STRPG</name>
<comment type="function">
    <text evidence="1">This protein binds to the 23S rRNA, and is important in its secondary structure. It is located near the subunit interface in the base of the L7/L12 stalk, and near the tRNA binding site of the peptidyltransferase center.</text>
</comment>
<comment type="subunit">
    <text evidence="1">Part of the 50S ribosomal subunit.</text>
</comment>
<comment type="similarity">
    <text evidence="1">Belongs to the universal ribosomal protein uL6 family.</text>
</comment>
<dbReference type="EMBL" id="AM295007">
    <property type="protein sequence ID" value="CAM29401.1"/>
    <property type="molecule type" value="Genomic_DNA"/>
</dbReference>
<dbReference type="RefSeq" id="WP_002986629.1">
    <property type="nucleotide sequence ID" value="NC_009332.1"/>
</dbReference>
<dbReference type="SMR" id="A2RC29"/>
<dbReference type="GeneID" id="69900041"/>
<dbReference type="KEGG" id="spf:SpyM50059"/>
<dbReference type="HOGENOM" id="CLU_065464_1_2_9"/>
<dbReference type="GO" id="GO:0022625">
    <property type="term" value="C:cytosolic large ribosomal subunit"/>
    <property type="evidence" value="ECO:0007669"/>
    <property type="project" value="TreeGrafter"/>
</dbReference>
<dbReference type="GO" id="GO:0019843">
    <property type="term" value="F:rRNA binding"/>
    <property type="evidence" value="ECO:0007669"/>
    <property type="project" value="UniProtKB-UniRule"/>
</dbReference>
<dbReference type="GO" id="GO:0003735">
    <property type="term" value="F:structural constituent of ribosome"/>
    <property type="evidence" value="ECO:0007669"/>
    <property type="project" value="InterPro"/>
</dbReference>
<dbReference type="GO" id="GO:0002181">
    <property type="term" value="P:cytoplasmic translation"/>
    <property type="evidence" value="ECO:0007669"/>
    <property type="project" value="TreeGrafter"/>
</dbReference>
<dbReference type="FunFam" id="3.90.930.12:FF:000001">
    <property type="entry name" value="50S ribosomal protein L6"/>
    <property type="match status" value="1"/>
</dbReference>
<dbReference type="FunFam" id="3.90.930.12:FF:000002">
    <property type="entry name" value="50S ribosomal protein L6"/>
    <property type="match status" value="1"/>
</dbReference>
<dbReference type="Gene3D" id="3.90.930.12">
    <property type="entry name" value="Ribosomal protein L6, alpha-beta domain"/>
    <property type="match status" value="2"/>
</dbReference>
<dbReference type="HAMAP" id="MF_01365_B">
    <property type="entry name" value="Ribosomal_uL6_B"/>
    <property type="match status" value="1"/>
</dbReference>
<dbReference type="InterPro" id="IPR000702">
    <property type="entry name" value="Ribosomal_uL6-like"/>
</dbReference>
<dbReference type="InterPro" id="IPR036789">
    <property type="entry name" value="Ribosomal_uL6-like_a/b-dom_sf"/>
</dbReference>
<dbReference type="InterPro" id="IPR020040">
    <property type="entry name" value="Ribosomal_uL6_a/b-dom"/>
</dbReference>
<dbReference type="InterPro" id="IPR019906">
    <property type="entry name" value="Ribosomal_uL6_bac-type"/>
</dbReference>
<dbReference type="InterPro" id="IPR002358">
    <property type="entry name" value="Ribosomal_uL6_CS"/>
</dbReference>
<dbReference type="NCBIfam" id="TIGR03654">
    <property type="entry name" value="L6_bact"/>
    <property type="match status" value="1"/>
</dbReference>
<dbReference type="PANTHER" id="PTHR11655">
    <property type="entry name" value="60S/50S RIBOSOMAL PROTEIN L6/L9"/>
    <property type="match status" value="1"/>
</dbReference>
<dbReference type="PANTHER" id="PTHR11655:SF14">
    <property type="entry name" value="LARGE RIBOSOMAL SUBUNIT PROTEIN UL6M"/>
    <property type="match status" value="1"/>
</dbReference>
<dbReference type="Pfam" id="PF00347">
    <property type="entry name" value="Ribosomal_L6"/>
    <property type="match status" value="2"/>
</dbReference>
<dbReference type="PIRSF" id="PIRSF002162">
    <property type="entry name" value="Ribosomal_L6"/>
    <property type="match status" value="1"/>
</dbReference>
<dbReference type="PRINTS" id="PR00059">
    <property type="entry name" value="RIBOSOMALL6"/>
</dbReference>
<dbReference type="SUPFAM" id="SSF56053">
    <property type="entry name" value="Ribosomal protein L6"/>
    <property type="match status" value="2"/>
</dbReference>
<dbReference type="PROSITE" id="PS00525">
    <property type="entry name" value="RIBOSOMAL_L6_1"/>
    <property type="match status" value="1"/>
</dbReference>